<protein>
    <recommendedName>
        <fullName evidence="1">Ribosome-binding factor A</fullName>
    </recommendedName>
</protein>
<dbReference type="EMBL" id="AM942444">
    <property type="protein sequence ID" value="CAQ04812.1"/>
    <property type="molecule type" value="Genomic_DNA"/>
</dbReference>
<dbReference type="RefSeq" id="WP_012360101.1">
    <property type="nucleotide sequence ID" value="NC_010545.1"/>
</dbReference>
<dbReference type="SMR" id="B1VGC3"/>
<dbReference type="STRING" id="504474.cu0852"/>
<dbReference type="GeneID" id="60603628"/>
<dbReference type="KEGG" id="cur:cu0852"/>
<dbReference type="eggNOG" id="COG0858">
    <property type="taxonomic scope" value="Bacteria"/>
</dbReference>
<dbReference type="HOGENOM" id="CLU_089475_0_0_11"/>
<dbReference type="Proteomes" id="UP000001727">
    <property type="component" value="Chromosome"/>
</dbReference>
<dbReference type="GO" id="GO:0005829">
    <property type="term" value="C:cytosol"/>
    <property type="evidence" value="ECO:0007669"/>
    <property type="project" value="TreeGrafter"/>
</dbReference>
<dbReference type="GO" id="GO:0043024">
    <property type="term" value="F:ribosomal small subunit binding"/>
    <property type="evidence" value="ECO:0007669"/>
    <property type="project" value="TreeGrafter"/>
</dbReference>
<dbReference type="GO" id="GO:0030490">
    <property type="term" value="P:maturation of SSU-rRNA"/>
    <property type="evidence" value="ECO:0007669"/>
    <property type="project" value="UniProtKB-UniRule"/>
</dbReference>
<dbReference type="Gene3D" id="3.30.300.20">
    <property type="match status" value="1"/>
</dbReference>
<dbReference type="HAMAP" id="MF_00003">
    <property type="entry name" value="RbfA"/>
    <property type="match status" value="1"/>
</dbReference>
<dbReference type="InterPro" id="IPR015946">
    <property type="entry name" value="KH_dom-like_a/b"/>
</dbReference>
<dbReference type="InterPro" id="IPR000238">
    <property type="entry name" value="RbfA"/>
</dbReference>
<dbReference type="InterPro" id="IPR023799">
    <property type="entry name" value="RbfA_dom_sf"/>
</dbReference>
<dbReference type="InterPro" id="IPR020053">
    <property type="entry name" value="Ribosome-bd_factorA_CS"/>
</dbReference>
<dbReference type="NCBIfam" id="TIGR00082">
    <property type="entry name" value="rbfA"/>
    <property type="match status" value="1"/>
</dbReference>
<dbReference type="PANTHER" id="PTHR33515">
    <property type="entry name" value="RIBOSOME-BINDING FACTOR A, CHLOROPLASTIC-RELATED"/>
    <property type="match status" value="1"/>
</dbReference>
<dbReference type="PANTHER" id="PTHR33515:SF1">
    <property type="entry name" value="RIBOSOME-BINDING FACTOR A, CHLOROPLASTIC-RELATED"/>
    <property type="match status" value="1"/>
</dbReference>
<dbReference type="Pfam" id="PF02033">
    <property type="entry name" value="RBFA"/>
    <property type="match status" value="1"/>
</dbReference>
<dbReference type="SUPFAM" id="SSF89919">
    <property type="entry name" value="Ribosome-binding factor A, RbfA"/>
    <property type="match status" value="1"/>
</dbReference>
<dbReference type="PROSITE" id="PS01319">
    <property type="entry name" value="RBFA"/>
    <property type="match status" value="1"/>
</dbReference>
<organism>
    <name type="scientific">Corynebacterium urealyticum (strain ATCC 43042 / DSM 7109)</name>
    <dbReference type="NCBI Taxonomy" id="504474"/>
    <lineage>
        <taxon>Bacteria</taxon>
        <taxon>Bacillati</taxon>
        <taxon>Actinomycetota</taxon>
        <taxon>Actinomycetes</taxon>
        <taxon>Mycobacteriales</taxon>
        <taxon>Corynebacteriaceae</taxon>
        <taxon>Corynebacterium</taxon>
    </lineage>
</organism>
<sequence length="143" mass="15642">MADNARAARMAKRIQQIVAVAIEREIKDPRLEYVTITDTRMTGDLHDASVFYTVRGASIDEEPDVPLAAAALESAKGQLRKIVGDQLSVRFTPTLSFVHDTVPEASAHMEKLLAEARAKDEAVRAQAAQAKPAGEANPYKERN</sequence>
<keyword id="KW-0963">Cytoplasm</keyword>
<keyword id="KW-1185">Reference proteome</keyword>
<keyword id="KW-0690">Ribosome biogenesis</keyword>
<feature type="chain" id="PRO_1000088878" description="Ribosome-binding factor A">
    <location>
        <begin position="1"/>
        <end position="143"/>
    </location>
</feature>
<feature type="region of interest" description="Disordered" evidence="2">
    <location>
        <begin position="123"/>
        <end position="143"/>
    </location>
</feature>
<feature type="compositionally biased region" description="Low complexity" evidence="2">
    <location>
        <begin position="124"/>
        <end position="136"/>
    </location>
</feature>
<evidence type="ECO:0000255" key="1">
    <source>
        <dbReference type="HAMAP-Rule" id="MF_00003"/>
    </source>
</evidence>
<evidence type="ECO:0000256" key="2">
    <source>
        <dbReference type="SAM" id="MobiDB-lite"/>
    </source>
</evidence>
<proteinExistence type="inferred from homology"/>
<comment type="function">
    <text evidence="1">One of several proteins that assist in the late maturation steps of the functional core of the 30S ribosomal subunit. Associates with free 30S ribosomal subunits (but not with 30S subunits that are part of 70S ribosomes or polysomes). Required for efficient processing of 16S rRNA. May interact with the 5'-terminal helix region of 16S rRNA.</text>
</comment>
<comment type="subunit">
    <text evidence="1">Monomer. Binds 30S ribosomal subunits, but not 50S ribosomal subunits or 70S ribosomes.</text>
</comment>
<comment type="subcellular location">
    <subcellularLocation>
        <location evidence="1">Cytoplasm</location>
    </subcellularLocation>
</comment>
<comment type="similarity">
    <text evidence="1">Belongs to the RbfA family.</text>
</comment>
<reference key="1">
    <citation type="journal article" date="2008" name="J. Biotechnol.">
        <title>The lifestyle of Corynebacterium urealyticum derived from its complete genome sequence established by pyrosequencing.</title>
        <authorList>
            <person name="Tauch A."/>
            <person name="Trost E."/>
            <person name="Tilker A."/>
            <person name="Ludewig U."/>
            <person name="Schneiker S."/>
            <person name="Goesmann A."/>
            <person name="Arnold W."/>
            <person name="Bekel T."/>
            <person name="Brinkrolf K."/>
            <person name="Brune I."/>
            <person name="Goetker S."/>
            <person name="Kalinowski J."/>
            <person name="Kamp P.-B."/>
            <person name="Lobo F.P."/>
            <person name="Viehoever P."/>
            <person name="Weisshaar B."/>
            <person name="Soriano F."/>
            <person name="Droege M."/>
            <person name="Puehler A."/>
        </authorList>
    </citation>
    <scope>NUCLEOTIDE SEQUENCE [LARGE SCALE GENOMIC DNA]</scope>
    <source>
        <strain>ATCC 43042 / DSM 7109</strain>
    </source>
</reference>
<name>RBFA_CORU7</name>
<gene>
    <name evidence="1" type="primary">rbfA</name>
    <name type="ordered locus">cu0852</name>
</gene>
<accession>B1VGC3</accession>